<comment type="function">
    <text evidence="1">Catalyzes the phosphorylation of the position 2 hydroxy group of 4-diphosphocytidyl-2C-methyl-D-erythritol.</text>
</comment>
<comment type="catalytic activity">
    <reaction evidence="1">
        <text>4-CDP-2-C-methyl-D-erythritol + ATP = 4-CDP-2-C-methyl-D-erythritol 2-phosphate + ADP + H(+)</text>
        <dbReference type="Rhea" id="RHEA:18437"/>
        <dbReference type="ChEBI" id="CHEBI:15378"/>
        <dbReference type="ChEBI" id="CHEBI:30616"/>
        <dbReference type="ChEBI" id="CHEBI:57823"/>
        <dbReference type="ChEBI" id="CHEBI:57919"/>
        <dbReference type="ChEBI" id="CHEBI:456216"/>
        <dbReference type="EC" id="2.7.1.148"/>
    </reaction>
</comment>
<comment type="pathway">
    <text evidence="1">Isoprenoid biosynthesis; isopentenyl diphosphate biosynthesis via DXP pathway; isopentenyl diphosphate from 1-deoxy-D-xylulose 5-phosphate: step 3/6.</text>
</comment>
<comment type="similarity">
    <text evidence="1">Belongs to the GHMP kinase family. IspE subfamily.</text>
</comment>
<proteinExistence type="inferred from homology"/>
<keyword id="KW-0067">ATP-binding</keyword>
<keyword id="KW-0414">Isoprene biosynthesis</keyword>
<keyword id="KW-0418">Kinase</keyword>
<keyword id="KW-0547">Nucleotide-binding</keyword>
<keyword id="KW-1185">Reference proteome</keyword>
<keyword id="KW-0808">Transferase</keyword>
<organism>
    <name type="scientific">Xanthomonas oryzae pv. oryzae (strain KACC10331 / KXO85)</name>
    <dbReference type="NCBI Taxonomy" id="291331"/>
    <lineage>
        <taxon>Bacteria</taxon>
        <taxon>Pseudomonadati</taxon>
        <taxon>Pseudomonadota</taxon>
        <taxon>Gammaproteobacteria</taxon>
        <taxon>Lysobacterales</taxon>
        <taxon>Lysobacteraceae</taxon>
        <taxon>Xanthomonas</taxon>
    </lineage>
</organism>
<dbReference type="EC" id="2.7.1.148" evidence="1"/>
<dbReference type="EMBL" id="AE013598">
    <property type="protein sequence ID" value="AAW76858.1"/>
    <property type="molecule type" value="Genomic_DNA"/>
</dbReference>
<dbReference type="SMR" id="Q5GWR3"/>
<dbReference type="STRING" id="291331.XOO3604"/>
<dbReference type="KEGG" id="xoo:XOO3604"/>
<dbReference type="PATRIC" id="fig|291331.8.peg.3994"/>
<dbReference type="HOGENOM" id="CLU_053057_3_0_6"/>
<dbReference type="UniPathway" id="UPA00056">
    <property type="reaction ID" value="UER00094"/>
</dbReference>
<dbReference type="Proteomes" id="UP000006735">
    <property type="component" value="Chromosome"/>
</dbReference>
<dbReference type="GO" id="GO:0050515">
    <property type="term" value="F:4-(cytidine 5'-diphospho)-2-C-methyl-D-erythritol kinase activity"/>
    <property type="evidence" value="ECO:0007669"/>
    <property type="project" value="UniProtKB-UniRule"/>
</dbReference>
<dbReference type="GO" id="GO:0005524">
    <property type="term" value="F:ATP binding"/>
    <property type="evidence" value="ECO:0007669"/>
    <property type="project" value="UniProtKB-UniRule"/>
</dbReference>
<dbReference type="GO" id="GO:0019288">
    <property type="term" value="P:isopentenyl diphosphate biosynthetic process, methylerythritol 4-phosphate pathway"/>
    <property type="evidence" value="ECO:0007669"/>
    <property type="project" value="UniProtKB-UniRule"/>
</dbReference>
<dbReference type="GO" id="GO:0016114">
    <property type="term" value="P:terpenoid biosynthetic process"/>
    <property type="evidence" value="ECO:0007669"/>
    <property type="project" value="InterPro"/>
</dbReference>
<dbReference type="FunFam" id="3.30.70.890:FF:000014">
    <property type="entry name" value="4-diphosphocytidyl-2-C-methyl-D-erythritol kinase"/>
    <property type="match status" value="1"/>
</dbReference>
<dbReference type="Gene3D" id="3.30.230.10">
    <property type="match status" value="1"/>
</dbReference>
<dbReference type="Gene3D" id="3.30.70.890">
    <property type="entry name" value="GHMP kinase, C-terminal domain"/>
    <property type="match status" value="1"/>
</dbReference>
<dbReference type="HAMAP" id="MF_00061">
    <property type="entry name" value="IspE"/>
    <property type="match status" value="1"/>
</dbReference>
<dbReference type="InterPro" id="IPR013750">
    <property type="entry name" value="GHMP_kinase_C_dom"/>
</dbReference>
<dbReference type="InterPro" id="IPR036554">
    <property type="entry name" value="GHMP_kinase_C_sf"/>
</dbReference>
<dbReference type="InterPro" id="IPR006204">
    <property type="entry name" value="GHMP_kinase_N_dom"/>
</dbReference>
<dbReference type="InterPro" id="IPR004424">
    <property type="entry name" value="IspE"/>
</dbReference>
<dbReference type="InterPro" id="IPR020568">
    <property type="entry name" value="Ribosomal_Su5_D2-typ_SF"/>
</dbReference>
<dbReference type="InterPro" id="IPR014721">
    <property type="entry name" value="Ribsml_uS5_D2-typ_fold_subgr"/>
</dbReference>
<dbReference type="NCBIfam" id="TIGR00154">
    <property type="entry name" value="ispE"/>
    <property type="match status" value="1"/>
</dbReference>
<dbReference type="PANTHER" id="PTHR43527">
    <property type="entry name" value="4-DIPHOSPHOCYTIDYL-2-C-METHYL-D-ERYTHRITOL KINASE, CHLOROPLASTIC"/>
    <property type="match status" value="1"/>
</dbReference>
<dbReference type="PANTHER" id="PTHR43527:SF2">
    <property type="entry name" value="4-DIPHOSPHOCYTIDYL-2-C-METHYL-D-ERYTHRITOL KINASE, CHLOROPLASTIC"/>
    <property type="match status" value="1"/>
</dbReference>
<dbReference type="Pfam" id="PF08544">
    <property type="entry name" value="GHMP_kinases_C"/>
    <property type="match status" value="1"/>
</dbReference>
<dbReference type="Pfam" id="PF00288">
    <property type="entry name" value="GHMP_kinases_N"/>
    <property type="match status" value="1"/>
</dbReference>
<dbReference type="PIRSF" id="PIRSF010376">
    <property type="entry name" value="IspE"/>
    <property type="match status" value="1"/>
</dbReference>
<dbReference type="SUPFAM" id="SSF55060">
    <property type="entry name" value="GHMP Kinase, C-terminal domain"/>
    <property type="match status" value="1"/>
</dbReference>
<dbReference type="SUPFAM" id="SSF54211">
    <property type="entry name" value="Ribosomal protein S5 domain 2-like"/>
    <property type="match status" value="1"/>
</dbReference>
<gene>
    <name evidence="1" type="primary">ispE</name>
    <name type="ordered locus">XOO3604</name>
</gene>
<accession>Q5GWR3</accession>
<feature type="chain" id="PRO_0000235155" description="4-diphosphocytidyl-2-C-methyl-D-erythritol kinase">
    <location>
        <begin position="1"/>
        <end position="295"/>
    </location>
</feature>
<feature type="active site" evidence="1">
    <location>
        <position position="22"/>
    </location>
</feature>
<feature type="active site" evidence="1">
    <location>
        <position position="148"/>
    </location>
</feature>
<feature type="binding site" evidence="1">
    <location>
        <begin position="106"/>
        <end position="116"/>
    </location>
    <ligand>
        <name>ATP</name>
        <dbReference type="ChEBI" id="CHEBI:30616"/>
    </ligand>
</feature>
<reference key="1">
    <citation type="journal article" date="2005" name="Nucleic Acids Res.">
        <title>The genome sequence of Xanthomonas oryzae pathovar oryzae KACC10331, the bacterial blight pathogen of rice.</title>
        <authorList>
            <person name="Lee B.-M."/>
            <person name="Park Y.-J."/>
            <person name="Park D.-S."/>
            <person name="Kang H.-W."/>
            <person name="Kim J.-G."/>
            <person name="Song E.-S."/>
            <person name="Park I.-C."/>
            <person name="Yoon U.-H."/>
            <person name="Hahn J.-H."/>
            <person name="Koo B.-S."/>
            <person name="Lee G.-B."/>
            <person name="Kim H."/>
            <person name="Park H.-S."/>
            <person name="Yoon K.-O."/>
            <person name="Kim J.-H."/>
            <person name="Jung C.-H."/>
            <person name="Koh N.-H."/>
            <person name="Seo J.-S."/>
            <person name="Go S.-J."/>
        </authorList>
    </citation>
    <scope>NUCLEOTIDE SEQUENCE [LARGE SCALE GENOMIC DNA]</scope>
    <source>
        <strain>KACC10331 / KXO85</strain>
    </source>
</reference>
<protein>
    <recommendedName>
        <fullName evidence="1">4-diphosphocytidyl-2-C-methyl-D-erythritol kinase</fullName>
        <shortName evidence="1">CMK</shortName>
        <ecNumber evidence="1">2.7.1.148</ecNumber>
    </recommendedName>
    <alternativeName>
        <fullName evidence="1">4-(cytidine-5'-diphospho)-2-C-methyl-D-erythritol kinase</fullName>
    </alternativeName>
</protein>
<evidence type="ECO:0000255" key="1">
    <source>
        <dbReference type="HAMAP-Rule" id="MF_00061"/>
    </source>
</evidence>
<name>ISPE_XANOR</name>
<sequence>MDRIALMNAPGTDWSAWPAPAKLNLFLQITGRRADGYHLLQTVFRLLDWGDTIHLRVRSDGQILRIGESLPGVAEDDDLVIRAARLLQSAAGAAAGAEIRVDKRIPAGGGFGGGSSDAATVLVALNALWGLALTADTLAELGLQLGADVPVFVRGRNAWAEGVGEQLTPIALPEAAYLLVDPGVHVPTPVLFRSQELTRDAAPAKITDFASGSLLDNAFEPVLRRREPAVEAVFQALSRVGTPRLTGSGSGCFVEFATRAAAEQALAQLPGSLRAWVVEGAAHSPLLDARDAMKV</sequence>